<accession>B5F8F3</accession>
<reference key="1">
    <citation type="journal article" date="2011" name="J. Bacteriol.">
        <title>Comparative genomics of 28 Salmonella enterica isolates: evidence for CRISPR-mediated adaptive sublineage evolution.</title>
        <authorList>
            <person name="Fricke W.F."/>
            <person name="Mammel M.K."/>
            <person name="McDermott P.F."/>
            <person name="Tartera C."/>
            <person name="White D.G."/>
            <person name="Leclerc J.E."/>
            <person name="Ravel J."/>
            <person name="Cebula T.A."/>
        </authorList>
    </citation>
    <scope>NUCLEOTIDE SEQUENCE [LARGE SCALE GENOMIC DNA]</scope>
    <source>
        <strain>SL483</strain>
    </source>
</reference>
<feature type="chain" id="PRO_1000127175" description="Small ribosomal subunit protein uS10">
    <location>
        <begin position="1"/>
        <end position="103"/>
    </location>
</feature>
<proteinExistence type="inferred from homology"/>
<sequence>MQNQRIRIRLKAFDHRLIDQSTAEIVETAKRTGAQVRGPIPLPTRKERFTVLISPHVNKDARDQYEIRTHKRLVDIVEPTEKTVDALMRLDLAAGVDVQISLG</sequence>
<dbReference type="EMBL" id="CP001138">
    <property type="protein sequence ID" value="ACH50443.1"/>
    <property type="molecule type" value="Genomic_DNA"/>
</dbReference>
<dbReference type="RefSeq" id="WP_001181005.1">
    <property type="nucleotide sequence ID" value="NC_011149.1"/>
</dbReference>
<dbReference type="SMR" id="B5F8F3"/>
<dbReference type="GeneID" id="98390443"/>
<dbReference type="KEGG" id="sea:SeAg_B3637"/>
<dbReference type="HOGENOM" id="CLU_122625_1_3_6"/>
<dbReference type="Proteomes" id="UP000008819">
    <property type="component" value="Chromosome"/>
</dbReference>
<dbReference type="GO" id="GO:1990904">
    <property type="term" value="C:ribonucleoprotein complex"/>
    <property type="evidence" value="ECO:0007669"/>
    <property type="project" value="UniProtKB-KW"/>
</dbReference>
<dbReference type="GO" id="GO:0005840">
    <property type="term" value="C:ribosome"/>
    <property type="evidence" value="ECO:0007669"/>
    <property type="project" value="UniProtKB-KW"/>
</dbReference>
<dbReference type="GO" id="GO:0003735">
    <property type="term" value="F:structural constituent of ribosome"/>
    <property type="evidence" value="ECO:0007669"/>
    <property type="project" value="InterPro"/>
</dbReference>
<dbReference type="GO" id="GO:0000049">
    <property type="term" value="F:tRNA binding"/>
    <property type="evidence" value="ECO:0007669"/>
    <property type="project" value="UniProtKB-UniRule"/>
</dbReference>
<dbReference type="GO" id="GO:0006412">
    <property type="term" value="P:translation"/>
    <property type="evidence" value="ECO:0007669"/>
    <property type="project" value="UniProtKB-UniRule"/>
</dbReference>
<dbReference type="FunFam" id="3.30.70.600:FF:000001">
    <property type="entry name" value="30S ribosomal protein S10"/>
    <property type="match status" value="1"/>
</dbReference>
<dbReference type="Gene3D" id="3.30.70.600">
    <property type="entry name" value="Ribosomal protein S10 domain"/>
    <property type="match status" value="1"/>
</dbReference>
<dbReference type="HAMAP" id="MF_00508">
    <property type="entry name" value="Ribosomal_uS10"/>
    <property type="match status" value="1"/>
</dbReference>
<dbReference type="InterPro" id="IPR001848">
    <property type="entry name" value="Ribosomal_uS10"/>
</dbReference>
<dbReference type="InterPro" id="IPR018268">
    <property type="entry name" value="Ribosomal_uS10_CS"/>
</dbReference>
<dbReference type="InterPro" id="IPR027486">
    <property type="entry name" value="Ribosomal_uS10_dom"/>
</dbReference>
<dbReference type="InterPro" id="IPR036838">
    <property type="entry name" value="Ribosomal_uS10_dom_sf"/>
</dbReference>
<dbReference type="NCBIfam" id="NF001861">
    <property type="entry name" value="PRK00596.1"/>
    <property type="match status" value="1"/>
</dbReference>
<dbReference type="NCBIfam" id="TIGR01049">
    <property type="entry name" value="rpsJ_bact"/>
    <property type="match status" value="1"/>
</dbReference>
<dbReference type="PANTHER" id="PTHR11700">
    <property type="entry name" value="30S RIBOSOMAL PROTEIN S10 FAMILY MEMBER"/>
    <property type="match status" value="1"/>
</dbReference>
<dbReference type="Pfam" id="PF00338">
    <property type="entry name" value="Ribosomal_S10"/>
    <property type="match status" value="1"/>
</dbReference>
<dbReference type="PRINTS" id="PR00971">
    <property type="entry name" value="RIBOSOMALS10"/>
</dbReference>
<dbReference type="SMART" id="SM01403">
    <property type="entry name" value="Ribosomal_S10"/>
    <property type="match status" value="1"/>
</dbReference>
<dbReference type="SUPFAM" id="SSF54999">
    <property type="entry name" value="Ribosomal protein S10"/>
    <property type="match status" value="1"/>
</dbReference>
<dbReference type="PROSITE" id="PS00361">
    <property type="entry name" value="RIBOSOMAL_S10"/>
    <property type="match status" value="1"/>
</dbReference>
<organism>
    <name type="scientific">Salmonella agona (strain SL483)</name>
    <dbReference type="NCBI Taxonomy" id="454166"/>
    <lineage>
        <taxon>Bacteria</taxon>
        <taxon>Pseudomonadati</taxon>
        <taxon>Pseudomonadota</taxon>
        <taxon>Gammaproteobacteria</taxon>
        <taxon>Enterobacterales</taxon>
        <taxon>Enterobacteriaceae</taxon>
        <taxon>Salmonella</taxon>
    </lineage>
</organism>
<name>RS10_SALA4</name>
<protein>
    <recommendedName>
        <fullName evidence="1">Small ribosomal subunit protein uS10</fullName>
    </recommendedName>
    <alternativeName>
        <fullName evidence="2">30S ribosomal protein S10</fullName>
    </alternativeName>
</protein>
<gene>
    <name evidence="1" type="primary">rpsJ</name>
    <name type="ordered locus">SeAg_B3637</name>
</gene>
<comment type="function">
    <text evidence="1">Involved in the binding of tRNA to the ribosomes.</text>
</comment>
<comment type="subunit">
    <text evidence="1">Part of the 30S ribosomal subunit.</text>
</comment>
<comment type="similarity">
    <text evidence="1">Belongs to the universal ribosomal protein uS10 family.</text>
</comment>
<keyword id="KW-0687">Ribonucleoprotein</keyword>
<keyword id="KW-0689">Ribosomal protein</keyword>
<evidence type="ECO:0000255" key="1">
    <source>
        <dbReference type="HAMAP-Rule" id="MF_00508"/>
    </source>
</evidence>
<evidence type="ECO:0000305" key="2"/>